<keyword id="KW-0150">Chloroplast</keyword>
<keyword id="KW-0249">Electron transport</keyword>
<keyword id="KW-0349">Heme</keyword>
<keyword id="KW-0408">Iron</keyword>
<keyword id="KW-0472">Membrane</keyword>
<keyword id="KW-0479">Metal-binding</keyword>
<keyword id="KW-0602">Photosynthesis</keyword>
<keyword id="KW-0604">Photosystem II</keyword>
<keyword id="KW-0934">Plastid</keyword>
<keyword id="KW-1185">Reference proteome</keyword>
<keyword id="KW-0793">Thylakoid</keyword>
<keyword id="KW-0812">Transmembrane</keyword>
<keyword id="KW-1133">Transmembrane helix</keyword>
<keyword id="KW-0813">Transport</keyword>
<dbReference type="EMBL" id="AP005672">
    <property type="protein sequence ID" value="BAC85034.1"/>
    <property type="molecule type" value="Genomic_DNA"/>
</dbReference>
<dbReference type="RefSeq" id="NP_904184.1">
    <property type="nucleotide sequence ID" value="NC_005087.2"/>
</dbReference>
<dbReference type="RefSeq" id="YP_009477515.1">
    <property type="nucleotide sequence ID" value="NC_037465.1"/>
</dbReference>
<dbReference type="SMR" id="Q6YXL8"/>
<dbReference type="FunCoup" id="Q6YXL8">
    <property type="interactions" value="76"/>
</dbReference>
<dbReference type="STRING" id="3218.Q6YXL8"/>
<dbReference type="GeneID" id="2546773"/>
<dbReference type="GeneID" id="36487129"/>
<dbReference type="KEGG" id="ppp:2546773"/>
<dbReference type="InParanoid" id="Q6YXL8"/>
<dbReference type="OrthoDB" id="77at2759"/>
<dbReference type="Proteomes" id="UP000006727">
    <property type="component" value="Chloroplast"/>
</dbReference>
<dbReference type="GO" id="GO:0009535">
    <property type="term" value="C:chloroplast thylakoid membrane"/>
    <property type="evidence" value="ECO:0007669"/>
    <property type="project" value="UniProtKB-SubCell"/>
</dbReference>
<dbReference type="GO" id="GO:0009539">
    <property type="term" value="C:photosystem II reaction center"/>
    <property type="evidence" value="ECO:0007669"/>
    <property type="project" value="InterPro"/>
</dbReference>
<dbReference type="GO" id="GO:0009055">
    <property type="term" value="F:electron transfer activity"/>
    <property type="evidence" value="ECO:0007669"/>
    <property type="project" value="UniProtKB-UniRule"/>
</dbReference>
<dbReference type="GO" id="GO:0020037">
    <property type="term" value="F:heme binding"/>
    <property type="evidence" value="ECO:0007669"/>
    <property type="project" value="InterPro"/>
</dbReference>
<dbReference type="GO" id="GO:0005506">
    <property type="term" value="F:iron ion binding"/>
    <property type="evidence" value="ECO:0007669"/>
    <property type="project" value="UniProtKB-UniRule"/>
</dbReference>
<dbReference type="GO" id="GO:0009767">
    <property type="term" value="P:photosynthetic electron transport chain"/>
    <property type="evidence" value="ECO:0007669"/>
    <property type="project" value="InterPro"/>
</dbReference>
<dbReference type="HAMAP" id="MF_00643">
    <property type="entry name" value="PSII_PsbF"/>
    <property type="match status" value="1"/>
</dbReference>
<dbReference type="InterPro" id="IPR006241">
    <property type="entry name" value="PSII_cyt_b559_bsu"/>
</dbReference>
<dbReference type="InterPro" id="IPR006216">
    <property type="entry name" value="PSII_cyt_b559_CS"/>
</dbReference>
<dbReference type="InterPro" id="IPR013081">
    <property type="entry name" value="PSII_cyt_b559_N"/>
</dbReference>
<dbReference type="NCBIfam" id="TIGR01333">
    <property type="entry name" value="cyt_b559_beta"/>
    <property type="match status" value="1"/>
</dbReference>
<dbReference type="Pfam" id="PF00283">
    <property type="entry name" value="Cytochrom_B559"/>
    <property type="match status" value="1"/>
</dbReference>
<dbReference type="PIRSF" id="PIRSF000037">
    <property type="entry name" value="PsbF"/>
    <property type="match status" value="1"/>
</dbReference>
<dbReference type="SUPFAM" id="SSF161045">
    <property type="entry name" value="Cytochrome b559 subunits"/>
    <property type="match status" value="1"/>
</dbReference>
<dbReference type="PROSITE" id="PS00537">
    <property type="entry name" value="CYTOCHROME_B559"/>
    <property type="match status" value="1"/>
</dbReference>
<organism>
    <name type="scientific">Physcomitrium patens</name>
    <name type="common">Spreading-leaved earth moss</name>
    <name type="synonym">Physcomitrella patens</name>
    <dbReference type="NCBI Taxonomy" id="3218"/>
    <lineage>
        <taxon>Eukaryota</taxon>
        <taxon>Viridiplantae</taxon>
        <taxon>Streptophyta</taxon>
        <taxon>Embryophyta</taxon>
        <taxon>Bryophyta</taxon>
        <taxon>Bryophytina</taxon>
        <taxon>Bryopsida</taxon>
        <taxon>Funariidae</taxon>
        <taxon>Funariales</taxon>
        <taxon>Funariaceae</taxon>
        <taxon>Physcomitrium</taxon>
    </lineage>
</organism>
<gene>
    <name evidence="1" type="primary">psbF</name>
</gene>
<geneLocation type="chloroplast"/>
<name>PSBF_PHYPA</name>
<comment type="function">
    <text evidence="1">This b-type cytochrome is tightly associated with the reaction center of photosystem II (PSII). PSII is a light-driven water:plastoquinone oxidoreductase that uses light energy to abstract electrons from H(2)O, generating O(2) and a proton gradient subsequently used for ATP formation. It consists of a core antenna complex that captures photons, and an electron transfer chain that converts photonic excitation into a charge separation.</text>
</comment>
<comment type="cofactor">
    <cofactor evidence="1">
        <name>heme b</name>
        <dbReference type="ChEBI" id="CHEBI:60344"/>
    </cofactor>
    <text evidence="1">With its partner (PsbE) binds heme. PSII binds additional chlorophylls, carotenoids and specific lipids.</text>
</comment>
<comment type="subunit">
    <text evidence="1">Heterodimer of an alpha subunit and a beta subunit. PSII is composed of 1 copy each of membrane proteins PsbA, PsbB, PsbC, PsbD, PsbE, PsbF, PsbH, PsbI, PsbJ, PsbK, PsbL, PsbM, PsbT, PsbX, PsbY, PsbZ, Psb30/Ycf12, at least 3 peripheral proteins of the oxygen-evolving complex and a large number of cofactors. It forms dimeric complexes.</text>
</comment>
<comment type="subcellular location">
    <subcellularLocation>
        <location evidence="1">Plastid</location>
        <location evidence="1">Chloroplast thylakoid membrane</location>
        <topology evidence="1">Single-pass membrane protein</topology>
    </subcellularLocation>
</comment>
<comment type="similarity">
    <text evidence="1">Belongs to the PsbE/PsbF family.</text>
</comment>
<sequence>MTIDRTYPIFTVRWLAVHGLAVPTVFFLGAISAMQFIQR</sequence>
<accession>Q6YXL8</accession>
<protein>
    <recommendedName>
        <fullName evidence="1">Cytochrome b559 subunit beta</fullName>
    </recommendedName>
    <alternativeName>
        <fullName evidence="1">PSII reaction center subunit VI</fullName>
    </alternativeName>
</protein>
<feature type="chain" id="PRO_0000200439" description="Cytochrome b559 subunit beta">
    <location>
        <begin position="1"/>
        <end position="39"/>
    </location>
</feature>
<feature type="transmembrane region" description="Helical" evidence="1">
    <location>
        <begin position="14"/>
        <end position="30"/>
    </location>
</feature>
<feature type="binding site" description="axial binding residue" evidence="1">
    <location>
        <position position="18"/>
    </location>
    <ligand>
        <name>heme</name>
        <dbReference type="ChEBI" id="CHEBI:30413"/>
        <note>ligand shared with alpha subunit</note>
    </ligand>
    <ligandPart>
        <name>Fe</name>
        <dbReference type="ChEBI" id="CHEBI:18248"/>
    </ligandPart>
</feature>
<proteinExistence type="inferred from homology"/>
<evidence type="ECO:0000255" key="1">
    <source>
        <dbReference type="HAMAP-Rule" id="MF_00643"/>
    </source>
</evidence>
<reference key="1">
    <citation type="journal article" date="2003" name="Nucleic Acids Res.">
        <title>Complete chloroplast DNA sequence of the moss Physcomitrella patens: evidence for the loss and relocation of rpoA from the chloroplast to the nucleus.</title>
        <authorList>
            <person name="Sugiura C."/>
            <person name="Kobayashi Y."/>
            <person name="Setsuyuki A."/>
            <person name="Sugita C."/>
            <person name="Sugita M."/>
        </authorList>
    </citation>
    <scope>NUCLEOTIDE SEQUENCE [LARGE SCALE GENOMIC DNA]</scope>
    <source>
        <strain>cv. Gransden 2004</strain>
    </source>
</reference>